<evidence type="ECO:0000255" key="1">
    <source>
        <dbReference type="HAMAP-Rule" id="MF_00044"/>
    </source>
</evidence>
<organism>
    <name type="scientific">Shewanella frigidimarina (strain NCIMB 400)</name>
    <dbReference type="NCBI Taxonomy" id="318167"/>
    <lineage>
        <taxon>Bacteria</taxon>
        <taxon>Pseudomonadati</taxon>
        <taxon>Pseudomonadota</taxon>
        <taxon>Gammaproteobacteria</taxon>
        <taxon>Alteromonadales</taxon>
        <taxon>Shewanellaceae</taxon>
        <taxon>Shewanella</taxon>
    </lineage>
</organism>
<keyword id="KW-0030">Aminoacyl-tRNA synthetase</keyword>
<keyword id="KW-0067">ATP-binding</keyword>
<keyword id="KW-0963">Cytoplasm</keyword>
<keyword id="KW-0436">Ligase</keyword>
<keyword id="KW-0547">Nucleotide-binding</keyword>
<keyword id="KW-0648">Protein biosynthesis</keyword>
<keyword id="KW-1185">Reference proteome</keyword>
<comment type="function">
    <text evidence="1">Catalyzes the attachment of L-aspartate to tRNA(Asp) in a two-step reaction: L-aspartate is first activated by ATP to form Asp-AMP and then transferred to the acceptor end of tRNA(Asp).</text>
</comment>
<comment type="catalytic activity">
    <reaction evidence="1">
        <text>tRNA(Asp) + L-aspartate + ATP = L-aspartyl-tRNA(Asp) + AMP + diphosphate</text>
        <dbReference type="Rhea" id="RHEA:19649"/>
        <dbReference type="Rhea" id="RHEA-COMP:9660"/>
        <dbReference type="Rhea" id="RHEA-COMP:9678"/>
        <dbReference type="ChEBI" id="CHEBI:29991"/>
        <dbReference type="ChEBI" id="CHEBI:30616"/>
        <dbReference type="ChEBI" id="CHEBI:33019"/>
        <dbReference type="ChEBI" id="CHEBI:78442"/>
        <dbReference type="ChEBI" id="CHEBI:78516"/>
        <dbReference type="ChEBI" id="CHEBI:456215"/>
        <dbReference type="EC" id="6.1.1.12"/>
    </reaction>
</comment>
<comment type="subunit">
    <text evidence="1">Homodimer.</text>
</comment>
<comment type="subcellular location">
    <subcellularLocation>
        <location evidence="1">Cytoplasm</location>
    </subcellularLocation>
</comment>
<comment type="similarity">
    <text evidence="1">Belongs to the class-II aminoacyl-tRNA synthetase family. Type 1 subfamily.</text>
</comment>
<protein>
    <recommendedName>
        <fullName evidence="1">Aspartate--tRNA ligase</fullName>
        <ecNumber evidence="1">6.1.1.12</ecNumber>
    </recommendedName>
    <alternativeName>
        <fullName evidence="1">Aspartyl-tRNA synthetase</fullName>
        <shortName evidence="1">AspRS</shortName>
    </alternativeName>
</protein>
<proteinExistence type="inferred from homology"/>
<sequence length="591" mass="65699">MRSHYCGDINQSHLGQEVTLVGWVNRSRDLGGVVFLDLRDREGLVQVVYDPDLKDVFEMASTLRSEFCVQIKGVVRARPESQINSQMKTGEIEILGKQLTIINASAPLPLSMDNYQNNSEEQRLKYRYLDLRRPEMAERLIFRAKVTSSVRRFLDGNGFLDIETPILTKATPEGARDYLVPSRTYKGQFFALPQSPQLFKQLLMMSGFDRYYQIVKCFRDEDLRADRQPEFTQIDIETSFMSAEQVMEKTEQMMRGLFQDLLNVDLGDFPRMTYAEAMKRYGSDKPDLRNPLELVDIADLVKDVEFAVFNGPANDVEGRVAALRIPTGASLSRKQIDDYTKFAGIYGAKGLAWMKINDLAAGMDGIQSPVLKFLTESIVNDIISRTGAQTGDIILFGADKANVVAEALGALRLKAGEDFKLLEGEWRPMWVVDFPMFEKINGGFHAVHHPFTAPRGISPAELAADPAAAISDAYDMVLNGCELGGGSVRIHNAEMQSTVFSILGIEAEEAQEKFGFLLEALRYGTPPHAGLAFGLDRIIMLMTGASSIRDVMAFPKTTTAACPLTNAPGFANPVQLTELGIAVIEKVKTEE</sequence>
<gene>
    <name evidence="1" type="primary">aspS</name>
    <name type="ordered locus">Sfri_2184</name>
</gene>
<reference key="1">
    <citation type="submission" date="2006-08" db="EMBL/GenBank/DDBJ databases">
        <title>Complete sequence of Shewanella frigidimarina NCIMB 400.</title>
        <authorList>
            <consortium name="US DOE Joint Genome Institute"/>
            <person name="Copeland A."/>
            <person name="Lucas S."/>
            <person name="Lapidus A."/>
            <person name="Barry K."/>
            <person name="Detter J.C."/>
            <person name="Glavina del Rio T."/>
            <person name="Hammon N."/>
            <person name="Israni S."/>
            <person name="Dalin E."/>
            <person name="Tice H."/>
            <person name="Pitluck S."/>
            <person name="Fredrickson J.K."/>
            <person name="Kolker E."/>
            <person name="McCuel L.A."/>
            <person name="DiChristina T."/>
            <person name="Nealson K.H."/>
            <person name="Newman D."/>
            <person name="Tiedje J.M."/>
            <person name="Zhou J."/>
            <person name="Romine M.F."/>
            <person name="Culley D.E."/>
            <person name="Serres M."/>
            <person name="Chertkov O."/>
            <person name="Brettin T."/>
            <person name="Bruce D."/>
            <person name="Han C."/>
            <person name="Tapia R."/>
            <person name="Gilna P."/>
            <person name="Schmutz J."/>
            <person name="Larimer F."/>
            <person name="Land M."/>
            <person name="Hauser L."/>
            <person name="Kyrpides N."/>
            <person name="Mikhailova N."/>
            <person name="Richardson P."/>
        </authorList>
    </citation>
    <scope>NUCLEOTIDE SEQUENCE [LARGE SCALE GENOMIC DNA]</scope>
    <source>
        <strain>NCIMB 400</strain>
    </source>
</reference>
<accession>Q081N5</accession>
<dbReference type="EC" id="6.1.1.12" evidence="1"/>
<dbReference type="EMBL" id="CP000447">
    <property type="protein sequence ID" value="ABI72030.1"/>
    <property type="molecule type" value="Genomic_DNA"/>
</dbReference>
<dbReference type="RefSeq" id="WP_011637640.1">
    <property type="nucleotide sequence ID" value="NC_008345.1"/>
</dbReference>
<dbReference type="SMR" id="Q081N5"/>
<dbReference type="STRING" id="318167.Sfri_2184"/>
<dbReference type="KEGG" id="sfr:Sfri_2184"/>
<dbReference type="eggNOG" id="COG0173">
    <property type="taxonomic scope" value="Bacteria"/>
</dbReference>
<dbReference type="HOGENOM" id="CLU_014330_3_2_6"/>
<dbReference type="OrthoDB" id="9802326at2"/>
<dbReference type="Proteomes" id="UP000000684">
    <property type="component" value="Chromosome"/>
</dbReference>
<dbReference type="GO" id="GO:0005737">
    <property type="term" value="C:cytoplasm"/>
    <property type="evidence" value="ECO:0007669"/>
    <property type="project" value="UniProtKB-SubCell"/>
</dbReference>
<dbReference type="GO" id="GO:0004815">
    <property type="term" value="F:aspartate-tRNA ligase activity"/>
    <property type="evidence" value="ECO:0007669"/>
    <property type="project" value="UniProtKB-UniRule"/>
</dbReference>
<dbReference type="GO" id="GO:0005524">
    <property type="term" value="F:ATP binding"/>
    <property type="evidence" value="ECO:0007669"/>
    <property type="project" value="UniProtKB-UniRule"/>
</dbReference>
<dbReference type="GO" id="GO:0003676">
    <property type="term" value="F:nucleic acid binding"/>
    <property type="evidence" value="ECO:0007669"/>
    <property type="project" value="InterPro"/>
</dbReference>
<dbReference type="GO" id="GO:0006422">
    <property type="term" value="P:aspartyl-tRNA aminoacylation"/>
    <property type="evidence" value="ECO:0007669"/>
    <property type="project" value="UniProtKB-UniRule"/>
</dbReference>
<dbReference type="CDD" id="cd00777">
    <property type="entry name" value="AspRS_core"/>
    <property type="match status" value="1"/>
</dbReference>
<dbReference type="CDD" id="cd04317">
    <property type="entry name" value="EcAspRS_like_N"/>
    <property type="match status" value="1"/>
</dbReference>
<dbReference type="FunFam" id="2.40.50.140:FF:000080">
    <property type="entry name" value="Aspartate--tRNA ligase"/>
    <property type="match status" value="1"/>
</dbReference>
<dbReference type="Gene3D" id="3.30.930.10">
    <property type="entry name" value="Bira Bifunctional Protein, Domain 2"/>
    <property type="match status" value="1"/>
</dbReference>
<dbReference type="Gene3D" id="3.30.1360.30">
    <property type="entry name" value="GAD-like domain"/>
    <property type="match status" value="1"/>
</dbReference>
<dbReference type="Gene3D" id="2.40.50.140">
    <property type="entry name" value="Nucleic acid-binding proteins"/>
    <property type="match status" value="1"/>
</dbReference>
<dbReference type="HAMAP" id="MF_00044">
    <property type="entry name" value="Asp_tRNA_synth_type1"/>
    <property type="match status" value="1"/>
</dbReference>
<dbReference type="InterPro" id="IPR004364">
    <property type="entry name" value="Aa-tRNA-synt_II"/>
</dbReference>
<dbReference type="InterPro" id="IPR006195">
    <property type="entry name" value="aa-tRNA-synth_II"/>
</dbReference>
<dbReference type="InterPro" id="IPR045864">
    <property type="entry name" value="aa-tRNA-synth_II/BPL/LPL"/>
</dbReference>
<dbReference type="InterPro" id="IPR004524">
    <property type="entry name" value="Asp-tRNA-ligase_1"/>
</dbReference>
<dbReference type="InterPro" id="IPR047089">
    <property type="entry name" value="Asp-tRNA-ligase_1_N"/>
</dbReference>
<dbReference type="InterPro" id="IPR002312">
    <property type="entry name" value="Asp/Asn-tRNA-synth_IIb"/>
</dbReference>
<dbReference type="InterPro" id="IPR047090">
    <property type="entry name" value="AspRS_core"/>
</dbReference>
<dbReference type="InterPro" id="IPR004115">
    <property type="entry name" value="GAD-like_sf"/>
</dbReference>
<dbReference type="InterPro" id="IPR029351">
    <property type="entry name" value="GAD_dom"/>
</dbReference>
<dbReference type="InterPro" id="IPR012340">
    <property type="entry name" value="NA-bd_OB-fold"/>
</dbReference>
<dbReference type="InterPro" id="IPR004365">
    <property type="entry name" value="NA-bd_OB_tRNA"/>
</dbReference>
<dbReference type="NCBIfam" id="TIGR00459">
    <property type="entry name" value="aspS_bact"/>
    <property type="match status" value="1"/>
</dbReference>
<dbReference type="NCBIfam" id="NF001750">
    <property type="entry name" value="PRK00476.1"/>
    <property type="match status" value="1"/>
</dbReference>
<dbReference type="PANTHER" id="PTHR22594:SF5">
    <property type="entry name" value="ASPARTATE--TRNA LIGASE, MITOCHONDRIAL"/>
    <property type="match status" value="1"/>
</dbReference>
<dbReference type="PANTHER" id="PTHR22594">
    <property type="entry name" value="ASPARTYL/LYSYL-TRNA SYNTHETASE"/>
    <property type="match status" value="1"/>
</dbReference>
<dbReference type="Pfam" id="PF02938">
    <property type="entry name" value="GAD"/>
    <property type="match status" value="1"/>
</dbReference>
<dbReference type="Pfam" id="PF00152">
    <property type="entry name" value="tRNA-synt_2"/>
    <property type="match status" value="1"/>
</dbReference>
<dbReference type="Pfam" id="PF01336">
    <property type="entry name" value="tRNA_anti-codon"/>
    <property type="match status" value="1"/>
</dbReference>
<dbReference type="PRINTS" id="PR01042">
    <property type="entry name" value="TRNASYNTHASP"/>
</dbReference>
<dbReference type="SUPFAM" id="SSF55681">
    <property type="entry name" value="Class II aaRS and biotin synthetases"/>
    <property type="match status" value="1"/>
</dbReference>
<dbReference type="SUPFAM" id="SSF55261">
    <property type="entry name" value="GAD domain-like"/>
    <property type="match status" value="1"/>
</dbReference>
<dbReference type="SUPFAM" id="SSF50249">
    <property type="entry name" value="Nucleic acid-binding proteins"/>
    <property type="match status" value="1"/>
</dbReference>
<dbReference type="PROSITE" id="PS50862">
    <property type="entry name" value="AA_TRNA_LIGASE_II"/>
    <property type="match status" value="1"/>
</dbReference>
<feature type="chain" id="PRO_1000006756" description="Aspartate--tRNA ligase">
    <location>
        <begin position="1"/>
        <end position="591"/>
    </location>
</feature>
<feature type="region of interest" description="Aspartate" evidence="1">
    <location>
        <begin position="197"/>
        <end position="200"/>
    </location>
</feature>
<feature type="binding site" evidence="1">
    <location>
        <position position="173"/>
    </location>
    <ligand>
        <name>L-aspartate</name>
        <dbReference type="ChEBI" id="CHEBI:29991"/>
    </ligand>
</feature>
<feature type="binding site" evidence="1">
    <location>
        <begin position="219"/>
        <end position="221"/>
    </location>
    <ligand>
        <name>ATP</name>
        <dbReference type="ChEBI" id="CHEBI:30616"/>
    </ligand>
</feature>
<feature type="binding site" evidence="1">
    <location>
        <position position="219"/>
    </location>
    <ligand>
        <name>L-aspartate</name>
        <dbReference type="ChEBI" id="CHEBI:29991"/>
    </ligand>
</feature>
<feature type="binding site" evidence="1">
    <location>
        <position position="228"/>
    </location>
    <ligand>
        <name>ATP</name>
        <dbReference type="ChEBI" id="CHEBI:30616"/>
    </ligand>
</feature>
<feature type="binding site" evidence="1">
    <location>
        <position position="448"/>
    </location>
    <ligand>
        <name>L-aspartate</name>
        <dbReference type="ChEBI" id="CHEBI:29991"/>
    </ligand>
</feature>
<feature type="binding site" evidence="1">
    <location>
        <position position="482"/>
    </location>
    <ligand>
        <name>ATP</name>
        <dbReference type="ChEBI" id="CHEBI:30616"/>
    </ligand>
</feature>
<feature type="binding site" evidence="1">
    <location>
        <position position="489"/>
    </location>
    <ligand>
        <name>L-aspartate</name>
        <dbReference type="ChEBI" id="CHEBI:29991"/>
    </ligand>
</feature>
<feature type="binding site" evidence="1">
    <location>
        <begin position="534"/>
        <end position="537"/>
    </location>
    <ligand>
        <name>ATP</name>
        <dbReference type="ChEBI" id="CHEBI:30616"/>
    </ligand>
</feature>
<name>SYD_SHEFN</name>